<name>HIS4_VESOH</name>
<feature type="chain" id="PRO_1000063241" description="1-(5-phosphoribosyl)-5-[(5-phosphoribosylamino)methylideneamino] imidazole-4-carboxamide isomerase">
    <location>
        <begin position="1"/>
        <end position="243"/>
    </location>
</feature>
<feature type="active site" description="Proton acceptor" evidence="1">
    <location>
        <position position="8"/>
    </location>
</feature>
<feature type="active site" description="Proton donor" evidence="1">
    <location>
        <position position="130"/>
    </location>
</feature>
<dbReference type="EC" id="5.3.1.16" evidence="1"/>
<dbReference type="EMBL" id="AP009247">
    <property type="protein sequence ID" value="BAF61982.1"/>
    <property type="molecule type" value="Genomic_DNA"/>
</dbReference>
<dbReference type="RefSeq" id="WP_011930251.1">
    <property type="nucleotide sequence ID" value="NC_009465.1"/>
</dbReference>
<dbReference type="SMR" id="A5CVQ5"/>
<dbReference type="STRING" id="412965.COSY_0877"/>
<dbReference type="KEGG" id="vok:COSY_0877"/>
<dbReference type="eggNOG" id="COG0106">
    <property type="taxonomic scope" value="Bacteria"/>
</dbReference>
<dbReference type="HOGENOM" id="CLU_048577_1_1_6"/>
<dbReference type="OrthoDB" id="9807749at2"/>
<dbReference type="UniPathway" id="UPA00031">
    <property type="reaction ID" value="UER00009"/>
</dbReference>
<dbReference type="Proteomes" id="UP000000247">
    <property type="component" value="Chromosome"/>
</dbReference>
<dbReference type="GO" id="GO:0005737">
    <property type="term" value="C:cytoplasm"/>
    <property type="evidence" value="ECO:0007669"/>
    <property type="project" value="UniProtKB-SubCell"/>
</dbReference>
<dbReference type="GO" id="GO:0003949">
    <property type="term" value="F:1-(5-phosphoribosyl)-5-[(5-phosphoribosylamino)methylideneamino]imidazole-4-carboxamide isomerase activity"/>
    <property type="evidence" value="ECO:0007669"/>
    <property type="project" value="UniProtKB-UniRule"/>
</dbReference>
<dbReference type="GO" id="GO:0000105">
    <property type="term" value="P:L-histidine biosynthetic process"/>
    <property type="evidence" value="ECO:0007669"/>
    <property type="project" value="UniProtKB-UniRule"/>
</dbReference>
<dbReference type="GO" id="GO:0000162">
    <property type="term" value="P:L-tryptophan biosynthetic process"/>
    <property type="evidence" value="ECO:0007669"/>
    <property type="project" value="TreeGrafter"/>
</dbReference>
<dbReference type="CDD" id="cd04732">
    <property type="entry name" value="HisA"/>
    <property type="match status" value="1"/>
</dbReference>
<dbReference type="FunFam" id="3.20.20.70:FF:000009">
    <property type="entry name" value="1-(5-phosphoribosyl)-5-[(5-phosphoribosylamino)methylideneamino] imidazole-4-carboxamide isomerase"/>
    <property type="match status" value="1"/>
</dbReference>
<dbReference type="Gene3D" id="3.20.20.70">
    <property type="entry name" value="Aldolase class I"/>
    <property type="match status" value="1"/>
</dbReference>
<dbReference type="HAMAP" id="MF_01014">
    <property type="entry name" value="HisA"/>
    <property type="match status" value="1"/>
</dbReference>
<dbReference type="InterPro" id="IPR013785">
    <property type="entry name" value="Aldolase_TIM"/>
</dbReference>
<dbReference type="InterPro" id="IPR006062">
    <property type="entry name" value="His_biosynth"/>
</dbReference>
<dbReference type="InterPro" id="IPR006063">
    <property type="entry name" value="HisA_bact_arch"/>
</dbReference>
<dbReference type="InterPro" id="IPR044524">
    <property type="entry name" value="Isoase_HisA-like"/>
</dbReference>
<dbReference type="InterPro" id="IPR023016">
    <property type="entry name" value="Isoase_HisA-like_bact"/>
</dbReference>
<dbReference type="InterPro" id="IPR011060">
    <property type="entry name" value="RibuloseP-bd_barrel"/>
</dbReference>
<dbReference type="NCBIfam" id="TIGR00007">
    <property type="entry name" value="1-(5-phosphoribosyl)-5-[(5-phosphoribosylamino)methylideneamino]imidazole-4-carboxamide isomerase"/>
    <property type="match status" value="1"/>
</dbReference>
<dbReference type="NCBIfam" id="NF010112">
    <property type="entry name" value="PRK13585.1"/>
    <property type="match status" value="1"/>
</dbReference>
<dbReference type="PANTHER" id="PTHR43090">
    <property type="entry name" value="1-(5-PHOSPHORIBOSYL)-5-[(5-PHOSPHORIBOSYLAMINO)METHYLIDENEAMINO] IMIDAZOLE-4-CARBOXAMIDE ISOMERASE"/>
    <property type="match status" value="1"/>
</dbReference>
<dbReference type="PANTHER" id="PTHR43090:SF2">
    <property type="entry name" value="1-(5-PHOSPHORIBOSYL)-5-[(5-PHOSPHORIBOSYLAMINO)METHYLIDENEAMINO] IMIDAZOLE-4-CARBOXAMIDE ISOMERASE"/>
    <property type="match status" value="1"/>
</dbReference>
<dbReference type="Pfam" id="PF00977">
    <property type="entry name" value="His_biosynth"/>
    <property type="match status" value="1"/>
</dbReference>
<dbReference type="SUPFAM" id="SSF51366">
    <property type="entry name" value="Ribulose-phoshate binding barrel"/>
    <property type="match status" value="1"/>
</dbReference>
<gene>
    <name evidence="1" type="primary">hisA</name>
    <name type="ordered locus">COSY_0877</name>
</gene>
<proteinExistence type="inferred from homology"/>
<comment type="catalytic activity">
    <reaction evidence="1">
        <text>1-(5-phospho-beta-D-ribosyl)-5-[(5-phospho-beta-D-ribosylamino)methylideneamino]imidazole-4-carboxamide = 5-[(5-phospho-1-deoxy-D-ribulos-1-ylimino)methylamino]-1-(5-phospho-beta-D-ribosyl)imidazole-4-carboxamide</text>
        <dbReference type="Rhea" id="RHEA:15469"/>
        <dbReference type="ChEBI" id="CHEBI:58435"/>
        <dbReference type="ChEBI" id="CHEBI:58525"/>
        <dbReference type="EC" id="5.3.1.16"/>
    </reaction>
</comment>
<comment type="pathway">
    <text evidence="1">Amino-acid biosynthesis; L-histidine biosynthesis; L-histidine from 5-phospho-alpha-D-ribose 1-diphosphate: step 4/9.</text>
</comment>
<comment type="subcellular location">
    <subcellularLocation>
        <location evidence="1">Cytoplasm</location>
    </subcellularLocation>
</comment>
<comment type="similarity">
    <text evidence="1">Belongs to the HisA/HisF family.</text>
</comment>
<reference key="1">
    <citation type="journal article" date="2007" name="Curr. Biol.">
        <title>Reduced genome of the thioautotrophic intracellular symbiont in a deep-sea clam, Calyptogena okutanii.</title>
        <authorList>
            <person name="Kuwahara H."/>
            <person name="Yoshida T."/>
            <person name="Takaki Y."/>
            <person name="Shimamura S."/>
            <person name="Nishi S."/>
            <person name="Harada M."/>
            <person name="Matsuyama K."/>
            <person name="Takishita K."/>
            <person name="Kawato M."/>
            <person name="Uematsu K."/>
            <person name="Fujiwara Y."/>
            <person name="Sato T."/>
            <person name="Kato C."/>
            <person name="Kitagawa M."/>
            <person name="Kato I."/>
            <person name="Maruyama T."/>
        </authorList>
    </citation>
    <scope>NUCLEOTIDE SEQUENCE [LARGE SCALE GENOMIC DNA]</scope>
    <source>
        <strain>HA</strain>
    </source>
</reference>
<protein>
    <recommendedName>
        <fullName evidence="1">1-(5-phosphoribosyl)-5-[(5-phosphoribosylamino)methylideneamino] imidazole-4-carboxamide isomerase</fullName>
        <ecNumber evidence="1">5.3.1.16</ecNumber>
    </recommendedName>
    <alternativeName>
        <fullName evidence="1">Phosphoribosylformimino-5-aminoimidazole carboxamide ribotide isomerase</fullName>
    </alternativeName>
</protein>
<keyword id="KW-0028">Amino-acid biosynthesis</keyword>
<keyword id="KW-0963">Cytoplasm</keyword>
<keyword id="KW-0368">Histidine biosynthesis</keyword>
<keyword id="KW-0413">Isomerase</keyword>
<keyword id="KW-1185">Reference proteome</keyword>
<accession>A5CVQ5</accession>
<evidence type="ECO:0000255" key="1">
    <source>
        <dbReference type="HAMAP-Rule" id="MF_01014"/>
    </source>
</evidence>
<sequence length="243" mass="26475">MIVIPAIDLKDGQCVRLRQGLMEDTTVFSSNPIEMATQWVEQGARRLHLVDLNGAFEGRPVNSTSITEIVSAFPDLPVQIGGGIRNIKIANTYIEAGVSYLIIGTMAVTDSEFVSELCREFPNKVIVGLDANNGFVATKGWVQKTNLNVVDLSKKFEQDGINSIIYTDIARDGMMQGMNVEAIVNLAKQISIPIIASGGITNIGDIIRLLTEVHFGIMGVITGRAIYEGTLDFKQAQQLCDEN</sequence>
<organism>
    <name type="scientific">Vesicomyosocius okutanii subsp. Calyptogena okutanii (strain HA)</name>
    <dbReference type="NCBI Taxonomy" id="412965"/>
    <lineage>
        <taxon>Bacteria</taxon>
        <taxon>Pseudomonadati</taxon>
        <taxon>Pseudomonadota</taxon>
        <taxon>Gammaproteobacteria</taxon>
        <taxon>Candidatus Pseudothioglobaceae</taxon>
        <taxon>Candidatus Vesicomyosocius</taxon>
    </lineage>
</organism>